<protein>
    <recommendedName>
        <fullName evidence="2">Glycine dehydrogenase (decarboxylating)</fullName>
        <ecNumber evidence="2">1.4.4.2</ecNumber>
    </recommendedName>
    <alternativeName>
        <fullName evidence="2">Glycine cleavage system P-protein</fullName>
    </alternativeName>
    <alternativeName>
        <fullName evidence="2">Glycine decarboxylase</fullName>
    </alternativeName>
    <alternativeName>
        <fullName evidence="2">Glycine dehydrogenase (aminomethyl-transferring)</fullName>
    </alternativeName>
</protein>
<reference key="1">
    <citation type="journal article" date="2001" name="Nature">
        <title>Complete genome sequence of a multiple drug resistant Salmonella enterica serovar Typhi CT18.</title>
        <authorList>
            <person name="Parkhill J."/>
            <person name="Dougan G."/>
            <person name="James K.D."/>
            <person name="Thomson N.R."/>
            <person name="Pickard D."/>
            <person name="Wain J."/>
            <person name="Churcher C.M."/>
            <person name="Mungall K.L."/>
            <person name="Bentley S.D."/>
            <person name="Holden M.T.G."/>
            <person name="Sebaihia M."/>
            <person name="Baker S."/>
            <person name="Basham D."/>
            <person name="Brooks K."/>
            <person name="Chillingworth T."/>
            <person name="Connerton P."/>
            <person name="Cronin A."/>
            <person name="Davis P."/>
            <person name="Davies R.M."/>
            <person name="Dowd L."/>
            <person name="White N."/>
            <person name="Farrar J."/>
            <person name="Feltwell T."/>
            <person name="Hamlin N."/>
            <person name="Haque A."/>
            <person name="Hien T.T."/>
            <person name="Holroyd S."/>
            <person name="Jagels K."/>
            <person name="Krogh A."/>
            <person name="Larsen T.S."/>
            <person name="Leather S."/>
            <person name="Moule S."/>
            <person name="O'Gaora P."/>
            <person name="Parry C."/>
            <person name="Quail M.A."/>
            <person name="Rutherford K.M."/>
            <person name="Simmonds M."/>
            <person name="Skelton J."/>
            <person name="Stevens K."/>
            <person name="Whitehead S."/>
            <person name="Barrell B.G."/>
        </authorList>
    </citation>
    <scope>NUCLEOTIDE SEQUENCE [LARGE SCALE GENOMIC DNA]</scope>
    <source>
        <strain>CT18</strain>
    </source>
</reference>
<reference key="2">
    <citation type="journal article" date="2003" name="J. Bacteriol.">
        <title>Comparative genomics of Salmonella enterica serovar Typhi strains Ty2 and CT18.</title>
        <authorList>
            <person name="Deng W."/>
            <person name="Liou S.-R."/>
            <person name="Plunkett G. III"/>
            <person name="Mayhew G.F."/>
            <person name="Rose D.J."/>
            <person name="Burland V."/>
            <person name="Kodoyianni V."/>
            <person name="Schwartz D.C."/>
            <person name="Blattner F.R."/>
        </authorList>
    </citation>
    <scope>NUCLEOTIDE SEQUENCE [LARGE SCALE GENOMIC DNA]</scope>
    <source>
        <strain>ATCC 700931 / Ty2</strain>
    </source>
</reference>
<keyword id="KW-0560">Oxidoreductase</keyword>
<keyword id="KW-0663">Pyridoxal phosphate</keyword>
<dbReference type="EC" id="1.4.4.2" evidence="2"/>
<dbReference type="EMBL" id="AL513382">
    <property type="protein sequence ID" value="CAD02883.1"/>
    <property type="molecule type" value="Genomic_DNA"/>
</dbReference>
<dbReference type="EMBL" id="AE014613">
    <property type="protein sequence ID" value="AAO70523.1"/>
    <property type="molecule type" value="Genomic_DNA"/>
</dbReference>
<dbReference type="RefSeq" id="NP_457451.1">
    <property type="nucleotide sequence ID" value="NC_003198.1"/>
</dbReference>
<dbReference type="RefSeq" id="WP_000194962.1">
    <property type="nucleotide sequence ID" value="NZ_WSUR01000024.1"/>
</dbReference>
<dbReference type="SMR" id="Q8Z3X0"/>
<dbReference type="STRING" id="220341.gene:17587084"/>
<dbReference type="KEGG" id="stt:t2971"/>
<dbReference type="KEGG" id="sty:STY3209"/>
<dbReference type="PATRIC" id="fig|220341.7.peg.3268"/>
<dbReference type="eggNOG" id="COG0403">
    <property type="taxonomic scope" value="Bacteria"/>
</dbReference>
<dbReference type="eggNOG" id="COG1003">
    <property type="taxonomic scope" value="Bacteria"/>
</dbReference>
<dbReference type="HOGENOM" id="CLU_004620_1_1_6"/>
<dbReference type="OMA" id="RNLICTC"/>
<dbReference type="OrthoDB" id="9801272at2"/>
<dbReference type="Proteomes" id="UP000000541">
    <property type="component" value="Chromosome"/>
</dbReference>
<dbReference type="Proteomes" id="UP000002670">
    <property type="component" value="Chromosome"/>
</dbReference>
<dbReference type="GO" id="GO:0005829">
    <property type="term" value="C:cytosol"/>
    <property type="evidence" value="ECO:0007669"/>
    <property type="project" value="TreeGrafter"/>
</dbReference>
<dbReference type="GO" id="GO:0005960">
    <property type="term" value="C:glycine cleavage complex"/>
    <property type="evidence" value="ECO:0007669"/>
    <property type="project" value="TreeGrafter"/>
</dbReference>
<dbReference type="GO" id="GO:0016594">
    <property type="term" value="F:glycine binding"/>
    <property type="evidence" value="ECO:0007669"/>
    <property type="project" value="TreeGrafter"/>
</dbReference>
<dbReference type="GO" id="GO:0004375">
    <property type="term" value="F:glycine dehydrogenase (decarboxylating) activity"/>
    <property type="evidence" value="ECO:0007669"/>
    <property type="project" value="UniProtKB-EC"/>
</dbReference>
<dbReference type="GO" id="GO:0030170">
    <property type="term" value="F:pyridoxal phosphate binding"/>
    <property type="evidence" value="ECO:0007669"/>
    <property type="project" value="TreeGrafter"/>
</dbReference>
<dbReference type="GO" id="GO:0019464">
    <property type="term" value="P:glycine decarboxylation via glycine cleavage system"/>
    <property type="evidence" value="ECO:0007669"/>
    <property type="project" value="UniProtKB-UniRule"/>
</dbReference>
<dbReference type="CDD" id="cd00613">
    <property type="entry name" value="GDC-P"/>
    <property type="match status" value="2"/>
</dbReference>
<dbReference type="FunFam" id="3.40.640.10:FF:000005">
    <property type="entry name" value="Glycine dehydrogenase (decarboxylating), mitochondrial"/>
    <property type="match status" value="1"/>
</dbReference>
<dbReference type="FunFam" id="3.90.1150.10:FF:000007">
    <property type="entry name" value="Glycine dehydrogenase (decarboxylating), mitochondrial"/>
    <property type="match status" value="1"/>
</dbReference>
<dbReference type="FunFam" id="3.40.640.10:FF:000007">
    <property type="entry name" value="glycine dehydrogenase (Decarboxylating), mitochondrial"/>
    <property type="match status" value="1"/>
</dbReference>
<dbReference type="Gene3D" id="3.90.1150.10">
    <property type="entry name" value="Aspartate Aminotransferase, domain 1"/>
    <property type="match status" value="1"/>
</dbReference>
<dbReference type="Gene3D" id="3.40.640.10">
    <property type="entry name" value="Type I PLP-dependent aspartate aminotransferase-like (Major domain)"/>
    <property type="match status" value="2"/>
</dbReference>
<dbReference type="HAMAP" id="MF_00711">
    <property type="entry name" value="GcvP"/>
    <property type="match status" value="1"/>
</dbReference>
<dbReference type="InterPro" id="IPR003437">
    <property type="entry name" value="GcvP"/>
</dbReference>
<dbReference type="InterPro" id="IPR049316">
    <property type="entry name" value="GDC-P_C"/>
</dbReference>
<dbReference type="InterPro" id="IPR049315">
    <property type="entry name" value="GDC-P_N"/>
</dbReference>
<dbReference type="InterPro" id="IPR020581">
    <property type="entry name" value="GDC_P"/>
</dbReference>
<dbReference type="InterPro" id="IPR015424">
    <property type="entry name" value="PyrdxlP-dep_Trfase"/>
</dbReference>
<dbReference type="InterPro" id="IPR015421">
    <property type="entry name" value="PyrdxlP-dep_Trfase_major"/>
</dbReference>
<dbReference type="InterPro" id="IPR015422">
    <property type="entry name" value="PyrdxlP-dep_Trfase_small"/>
</dbReference>
<dbReference type="NCBIfam" id="TIGR00461">
    <property type="entry name" value="gcvP"/>
    <property type="match status" value="1"/>
</dbReference>
<dbReference type="NCBIfam" id="NF003346">
    <property type="entry name" value="PRK04366.1"/>
    <property type="match status" value="1"/>
</dbReference>
<dbReference type="PANTHER" id="PTHR11773:SF13">
    <property type="entry name" value="GLYCINE DEHYDROGENASE (DECARBOXYLATING)"/>
    <property type="match status" value="1"/>
</dbReference>
<dbReference type="PANTHER" id="PTHR11773">
    <property type="entry name" value="GLYCINE DEHYDROGENASE, DECARBOXYLATING"/>
    <property type="match status" value="1"/>
</dbReference>
<dbReference type="Pfam" id="PF21478">
    <property type="entry name" value="GcvP2_C"/>
    <property type="match status" value="1"/>
</dbReference>
<dbReference type="Pfam" id="PF02347">
    <property type="entry name" value="GDC-P"/>
    <property type="match status" value="2"/>
</dbReference>
<dbReference type="SUPFAM" id="SSF53383">
    <property type="entry name" value="PLP-dependent transferases"/>
    <property type="match status" value="2"/>
</dbReference>
<evidence type="ECO:0000250" key="1"/>
<evidence type="ECO:0000255" key="2">
    <source>
        <dbReference type="HAMAP-Rule" id="MF_00711"/>
    </source>
</evidence>
<proteinExistence type="inferred from homology"/>
<sequence>MTQTLSQLENRGAFIERHIGPDAAQQQEMLNAVGAESLNALTGQIVPKDIQLATPPQVGEAATEYAALAELKAIAGRNKRFTSYIGMGYTAVQLPPVILRNMLENPGWYTAYTPYQPEVSQGRLEALLNFQQVTLDLTGLDMASASLLDEATAAAEAMAMAKRVSKLKNANRFFVAADVHPQTLDVVRTRAKTFGFDVIVDDADKVLDHQDVFGVLLQQVGTTGEIHDYGTLISELKARKVIVSVAADFMALVLLTAPGKQGADIVFGSAQRFGVPMGYGGPHAAFFAAKDEFKRSMPGRIIGVSKDAAGNTALRMAMQTREQHIRREKANSNICTSQVLLANIASLYAVYHGPVGLKRIANRIHRLTDILAAGLQQKGLKLRHAHYFDTLCVEVADKAAVLARAEAAEINLRSDIHNAVGITLDETTTRENVAQLFNVLLGDSHGLNIETLDKDVALDSRSIQQGMLRDDAILTHPVFNRYHSETEMMRYMHSLERKDLALNQAMIPLGSCTMKLNAAAEMIPITWPEFAELHPFCPPEQAEGYHQMISQLSDWLVKLTGYDAVCMQPNSGAQGEYAGLLAIRHYHGSRNEGHRDICLIPASAHGTNPASAHMAGMQVVVVACDKNGNIDLDDLRAKAEQHAANLSCIMVTYPSTHGVYEETIREVCEVVHQFGGQVYLDGANMNAQVGITSPGFIGADVSHLNLHKTFCIPHGGGGPGMGPIGVKAHLAPFVPGHSVVQIEGMLTRQGAVSAAPFGSASILPISWMYIRMMGAEGLKQASQVAILNANYIASRLKDAYPVLYTGRDGRVAHECILDIRPLKEETGISELDIAKRLIDYGFHAPTMSFPVAGTLMVEPTESEGKAELDRFIDAMLAIRAEIDQVKAGVWPLEDNPLVNAPHIQSELVAEWAHPYSREVAVFPAGVADKYWPTVKRLDDVYGDRNLFCSCVPISDYQ</sequence>
<accession>Q8Z3X0</accession>
<comment type="function">
    <text evidence="2">The glycine cleavage system catalyzes the degradation of glycine. The P protein binds the alpha-amino group of glycine through its pyridoxal phosphate cofactor; CO(2) is released and the remaining methylamine moiety is then transferred to the lipoamide cofactor of the H protein.</text>
</comment>
<comment type="catalytic activity">
    <reaction evidence="2">
        <text>N(6)-[(R)-lipoyl]-L-lysyl-[glycine-cleavage complex H protein] + glycine + H(+) = N(6)-[(R)-S(8)-aminomethyldihydrolipoyl]-L-lysyl-[glycine-cleavage complex H protein] + CO2</text>
        <dbReference type="Rhea" id="RHEA:24304"/>
        <dbReference type="Rhea" id="RHEA-COMP:10494"/>
        <dbReference type="Rhea" id="RHEA-COMP:10495"/>
        <dbReference type="ChEBI" id="CHEBI:15378"/>
        <dbReference type="ChEBI" id="CHEBI:16526"/>
        <dbReference type="ChEBI" id="CHEBI:57305"/>
        <dbReference type="ChEBI" id="CHEBI:83099"/>
        <dbReference type="ChEBI" id="CHEBI:83143"/>
        <dbReference type="EC" id="1.4.4.2"/>
    </reaction>
</comment>
<comment type="cofactor">
    <cofactor evidence="2">
        <name>pyridoxal 5'-phosphate</name>
        <dbReference type="ChEBI" id="CHEBI:597326"/>
    </cofactor>
</comment>
<comment type="subunit">
    <text evidence="2">The glycine cleavage system is composed of four proteins: P, T, L and H.</text>
</comment>
<comment type="similarity">
    <text evidence="2">Belongs to the GcvP family.</text>
</comment>
<feature type="initiator methionine" description="Removed" evidence="1">
    <location>
        <position position="1"/>
    </location>
</feature>
<feature type="chain" id="PRO_0000166934" description="Glycine dehydrogenase (decarboxylating)">
    <location>
        <begin position="2"/>
        <end position="957"/>
    </location>
</feature>
<feature type="modified residue" description="N6-(pyridoxal phosphate)lysine" evidence="2">
    <location>
        <position position="708"/>
    </location>
</feature>
<name>GCSP_SALTI</name>
<organism>
    <name type="scientific">Salmonella typhi</name>
    <dbReference type="NCBI Taxonomy" id="90370"/>
    <lineage>
        <taxon>Bacteria</taxon>
        <taxon>Pseudomonadati</taxon>
        <taxon>Pseudomonadota</taxon>
        <taxon>Gammaproteobacteria</taxon>
        <taxon>Enterobacterales</taxon>
        <taxon>Enterobacteriaceae</taxon>
        <taxon>Salmonella</taxon>
    </lineage>
</organism>
<gene>
    <name evidence="2" type="primary">gcvP</name>
    <name type="ordered locus">STY3209</name>
    <name type="ordered locus">t2971</name>
</gene>